<proteinExistence type="evidence at protein level"/>
<sequence length="193" mass="21732">MIKAILIFNNHGKPRLSKFYQPYSEDTQQQIIRETFHLVSKRDENVCNFLEGGLLIGGSDNKLIYRHYATLYFVFCVDSSESELGILDLIQVFVETLDKCFENVCELDLIFHVDKVHNILAEMVMGGMVLETNMNEIVTQIDAQNKLEKSEAGLAGAPARAVSAVKNMNLPEIPRNINIGDISIKVPNLPSFK</sequence>
<name>AP3S1_MOUSE</name>
<reference key="1">
    <citation type="journal article" date="1998" name="J. Biol. Chem.">
        <title>Interaction of insulin receptor substrate-1 with the sigma3A subunit of the adaptor protein complex-3 in cultured adipocytes.</title>
        <authorList>
            <person name="VanRenterghem B."/>
            <person name="Morin M."/>
            <person name="Czech M.P."/>
            <person name="Heller-Harrison R.A."/>
        </authorList>
    </citation>
    <scope>NUCLEOTIDE SEQUENCE [MRNA]</scope>
    <source>
        <tissue>Adipocyte</tissue>
    </source>
</reference>
<reference key="2">
    <citation type="journal article" date="2005" name="Science">
        <title>The transcriptional landscape of the mammalian genome.</title>
        <authorList>
            <person name="Carninci P."/>
            <person name="Kasukawa T."/>
            <person name="Katayama S."/>
            <person name="Gough J."/>
            <person name="Frith M.C."/>
            <person name="Maeda N."/>
            <person name="Oyama R."/>
            <person name="Ravasi T."/>
            <person name="Lenhard B."/>
            <person name="Wells C."/>
            <person name="Kodzius R."/>
            <person name="Shimokawa K."/>
            <person name="Bajic V.B."/>
            <person name="Brenner S.E."/>
            <person name="Batalov S."/>
            <person name="Forrest A.R."/>
            <person name="Zavolan M."/>
            <person name="Davis M.J."/>
            <person name="Wilming L.G."/>
            <person name="Aidinis V."/>
            <person name="Allen J.E."/>
            <person name="Ambesi-Impiombato A."/>
            <person name="Apweiler R."/>
            <person name="Aturaliya R.N."/>
            <person name="Bailey T.L."/>
            <person name="Bansal M."/>
            <person name="Baxter L."/>
            <person name="Beisel K.W."/>
            <person name="Bersano T."/>
            <person name="Bono H."/>
            <person name="Chalk A.M."/>
            <person name="Chiu K.P."/>
            <person name="Choudhary V."/>
            <person name="Christoffels A."/>
            <person name="Clutterbuck D.R."/>
            <person name="Crowe M.L."/>
            <person name="Dalla E."/>
            <person name="Dalrymple B.P."/>
            <person name="de Bono B."/>
            <person name="Della Gatta G."/>
            <person name="di Bernardo D."/>
            <person name="Down T."/>
            <person name="Engstrom P."/>
            <person name="Fagiolini M."/>
            <person name="Faulkner G."/>
            <person name="Fletcher C.F."/>
            <person name="Fukushima T."/>
            <person name="Furuno M."/>
            <person name="Futaki S."/>
            <person name="Gariboldi M."/>
            <person name="Georgii-Hemming P."/>
            <person name="Gingeras T.R."/>
            <person name="Gojobori T."/>
            <person name="Green R.E."/>
            <person name="Gustincich S."/>
            <person name="Harbers M."/>
            <person name="Hayashi Y."/>
            <person name="Hensch T.K."/>
            <person name="Hirokawa N."/>
            <person name="Hill D."/>
            <person name="Huminiecki L."/>
            <person name="Iacono M."/>
            <person name="Ikeo K."/>
            <person name="Iwama A."/>
            <person name="Ishikawa T."/>
            <person name="Jakt M."/>
            <person name="Kanapin A."/>
            <person name="Katoh M."/>
            <person name="Kawasawa Y."/>
            <person name="Kelso J."/>
            <person name="Kitamura H."/>
            <person name="Kitano H."/>
            <person name="Kollias G."/>
            <person name="Krishnan S.P."/>
            <person name="Kruger A."/>
            <person name="Kummerfeld S.K."/>
            <person name="Kurochkin I.V."/>
            <person name="Lareau L.F."/>
            <person name="Lazarevic D."/>
            <person name="Lipovich L."/>
            <person name="Liu J."/>
            <person name="Liuni S."/>
            <person name="McWilliam S."/>
            <person name="Madan Babu M."/>
            <person name="Madera M."/>
            <person name="Marchionni L."/>
            <person name="Matsuda H."/>
            <person name="Matsuzawa S."/>
            <person name="Miki H."/>
            <person name="Mignone F."/>
            <person name="Miyake S."/>
            <person name="Morris K."/>
            <person name="Mottagui-Tabar S."/>
            <person name="Mulder N."/>
            <person name="Nakano N."/>
            <person name="Nakauchi H."/>
            <person name="Ng P."/>
            <person name="Nilsson R."/>
            <person name="Nishiguchi S."/>
            <person name="Nishikawa S."/>
            <person name="Nori F."/>
            <person name="Ohara O."/>
            <person name="Okazaki Y."/>
            <person name="Orlando V."/>
            <person name="Pang K.C."/>
            <person name="Pavan W.J."/>
            <person name="Pavesi G."/>
            <person name="Pesole G."/>
            <person name="Petrovsky N."/>
            <person name="Piazza S."/>
            <person name="Reed J."/>
            <person name="Reid J.F."/>
            <person name="Ring B.Z."/>
            <person name="Ringwald M."/>
            <person name="Rost B."/>
            <person name="Ruan Y."/>
            <person name="Salzberg S.L."/>
            <person name="Sandelin A."/>
            <person name="Schneider C."/>
            <person name="Schoenbach C."/>
            <person name="Sekiguchi K."/>
            <person name="Semple C.A."/>
            <person name="Seno S."/>
            <person name="Sessa L."/>
            <person name="Sheng Y."/>
            <person name="Shibata Y."/>
            <person name="Shimada H."/>
            <person name="Shimada K."/>
            <person name="Silva D."/>
            <person name="Sinclair B."/>
            <person name="Sperling S."/>
            <person name="Stupka E."/>
            <person name="Sugiura K."/>
            <person name="Sultana R."/>
            <person name="Takenaka Y."/>
            <person name="Taki K."/>
            <person name="Tammoja K."/>
            <person name="Tan S.L."/>
            <person name="Tang S."/>
            <person name="Taylor M.S."/>
            <person name="Tegner J."/>
            <person name="Teichmann S.A."/>
            <person name="Ueda H.R."/>
            <person name="van Nimwegen E."/>
            <person name="Verardo R."/>
            <person name="Wei C.L."/>
            <person name="Yagi K."/>
            <person name="Yamanishi H."/>
            <person name="Zabarovsky E."/>
            <person name="Zhu S."/>
            <person name="Zimmer A."/>
            <person name="Hide W."/>
            <person name="Bult C."/>
            <person name="Grimmond S.M."/>
            <person name="Teasdale R.D."/>
            <person name="Liu E.T."/>
            <person name="Brusic V."/>
            <person name="Quackenbush J."/>
            <person name="Wahlestedt C."/>
            <person name="Mattick J.S."/>
            <person name="Hume D.A."/>
            <person name="Kai C."/>
            <person name="Sasaki D."/>
            <person name="Tomaru Y."/>
            <person name="Fukuda S."/>
            <person name="Kanamori-Katayama M."/>
            <person name="Suzuki M."/>
            <person name="Aoki J."/>
            <person name="Arakawa T."/>
            <person name="Iida J."/>
            <person name="Imamura K."/>
            <person name="Itoh M."/>
            <person name="Kato T."/>
            <person name="Kawaji H."/>
            <person name="Kawagashira N."/>
            <person name="Kawashima T."/>
            <person name="Kojima M."/>
            <person name="Kondo S."/>
            <person name="Konno H."/>
            <person name="Nakano K."/>
            <person name="Ninomiya N."/>
            <person name="Nishio T."/>
            <person name="Okada M."/>
            <person name="Plessy C."/>
            <person name="Shibata K."/>
            <person name="Shiraki T."/>
            <person name="Suzuki S."/>
            <person name="Tagami M."/>
            <person name="Waki K."/>
            <person name="Watahiki A."/>
            <person name="Okamura-Oho Y."/>
            <person name="Suzuki H."/>
            <person name="Kawai J."/>
            <person name="Hayashizaki Y."/>
        </authorList>
    </citation>
    <scope>NUCLEOTIDE SEQUENCE [LARGE SCALE MRNA]</scope>
    <source>
        <strain>C57BL/6J</strain>
        <tissue>Kidney</tissue>
    </source>
</reference>
<reference key="3">
    <citation type="journal article" date="2004" name="Genome Res.">
        <title>The status, quality, and expansion of the NIH full-length cDNA project: the Mammalian Gene Collection (MGC).</title>
        <authorList>
            <consortium name="The MGC Project Team"/>
        </authorList>
    </citation>
    <scope>NUCLEOTIDE SEQUENCE [LARGE SCALE MRNA]</scope>
    <source>
        <tissue>Salivary gland</tissue>
    </source>
</reference>
<reference key="4">
    <citation type="journal article" date="2003" name="Dev. Cell">
        <title>Specific regulation of the adaptor protein complex AP-3 by the Arf GAP AGAP1.</title>
        <authorList>
            <person name="Nie Z."/>
            <person name="Boehm M."/>
            <person name="Boja E.S."/>
            <person name="Vass W.C."/>
            <person name="Bonifacino J.S."/>
            <person name="Fales H.M."/>
            <person name="Randazzo P.A."/>
        </authorList>
    </citation>
    <scope>INTERACTION WITH AGAP1</scope>
</reference>
<reference key="5">
    <citation type="journal article" date="2006" name="Mol. Cell. Proteomics">
        <title>Comprehensive identification of phosphorylation sites in postsynaptic density preparations.</title>
        <authorList>
            <person name="Trinidad J.C."/>
            <person name="Specht C.G."/>
            <person name="Thalhammer A."/>
            <person name="Schoepfer R."/>
            <person name="Burlingame A.L."/>
        </authorList>
    </citation>
    <scope>IDENTIFICATION BY MASS SPECTROMETRY [LARGE SCALE ANALYSIS]</scope>
    <source>
        <tissue>Brain</tissue>
    </source>
</reference>
<reference key="6">
    <citation type="journal article" date="2010" name="Cell">
        <title>A tissue-specific atlas of mouse protein phosphorylation and expression.</title>
        <authorList>
            <person name="Huttlin E.L."/>
            <person name="Jedrychowski M.P."/>
            <person name="Elias J.E."/>
            <person name="Goswami T."/>
            <person name="Rad R."/>
            <person name="Beausoleil S.A."/>
            <person name="Villen J."/>
            <person name="Haas W."/>
            <person name="Sowa M.E."/>
            <person name="Gygi S.P."/>
        </authorList>
    </citation>
    <scope>IDENTIFICATION BY MASS SPECTROMETRY [LARGE SCALE ANALYSIS]</scope>
    <source>
        <tissue>Brain</tissue>
        <tissue>Brown adipose tissue</tissue>
        <tissue>Kidney</tissue>
        <tissue>Liver</tissue>
        <tissue>Lung</tissue>
        <tissue>Pancreas</tissue>
        <tissue>Spleen</tissue>
        <tissue>Testis</tissue>
    </source>
</reference>
<reference key="7">
    <citation type="journal article" date="2011" name="Mol. Biol. Cell">
        <title>The schizophrenia susceptibility factor dysbindin and its associated complex sort cargoes from cell bodies to the synapse.</title>
        <authorList>
            <person name="Larimore J."/>
            <person name="Tornieri K."/>
            <person name="Ryder P.V."/>
            <person name="Gokhale A."/>
            <person name="Zlatic S.A."/>
            <person name="Craige B."/>
            <person name="Lee J.D."/>
            <person name="Talbot K."/>
            <person name="Pare J.F."/>
            <person name="Smith Y."/>
            <person name="Faundez V."/>
        </authorList>
    </citation>
    <scope>FUNCTION</scope>
    <scope>ASSOCIATION WITH THE BLOC-1 COMPLEX</scope>
</reference>
<protein>
    <recommendedName>
        <fullName>AP-3 complex subunit sigma-1</fullName>
    </recommendedName>
    <alternativeName>
        <fullName>AP-3 complex subunit sigma-3A</fullName>
    </alternativeName>
    <alternativeName>
        <fullName>Adaptor-related protein complex 3 subunit sigma-1</fullName>
    </alternativeName>
    <alternativeName>
        <fullName>Sigma-3A-adaptin</fullName>
        <shortName>Sigma3A-adaptin</shortName>
    </alternativeName>
    <alternativeName>
        <fullName>Sigma-adaptin 3a</fullName>
    </alternativeName>
</protein>
<keyword id="KW-0968">Cytoplasmic vesicle</keyword>
<keyword id="KW-0333">Golgi apparatus</keyword>
<keyword id="KW-0472">Membrane</keyword>
<keyword id="KW-0597">Phosphoprotein</keyword>
<keyword id="KW-0653">Protein transport</keyword>
<keyword id="KW-1185">Reference proteome</keyword>
<keyword id="KW-0813">Transport</keyword>
<comment type="function">
    <text evidence="4">Part of the AP-3 complex, an adaptor-related complex which is not clathrin-associated. The complex is associated with the Golgi region as well as more peripheral structures. It facilitates the budding of vesicles from the Golgi membrane and may be directly involved in trafficking to lysosomes. In concert with the BLOC-1 complex, AP-3 is required to target cargos into vesicles assembled at cell bodies for delivery into neurites and nerve terminals.</text>
</comment>
<comment type="subunit">
    <text evidence="1 3">Adaptor protein complex 3 (AP-3) is a heterotetramer composed of two large adaptins (delta-type subunit AP3D1 and beta-type subunit AP3B1 or AP3B2), a medium adaptin (mu-type subunit AP3M1 or AP3M2) and a small adaptin (sigma-type subunit APS1 or AP3S2) (By similarity). AP-3 associates with the BLOC-1 complex. Interacts with AGAP1.</text>
</comment>
<comment type="subcellular location">
    <subcellularLocation>
        <location>Golgi apparatus</location>
    </subcellularLocation>
    <subcellularLocation>
        <location evidence="1">Cytoplasmic vesicle membrane</location>
        <topology evidence="1">Peripheral membrane protein</topology>
        <orientation evidence="1">Cytoplasmic side</orientation>
    </subcellularLocation>
    <text evidence="1">Component of the coat surrounding the cytoplasmic face of coated vesicles located at the Golgi complex.</text>
</comment>
<comment type="similarity">
    <text evidence="5">Belongs to the adaptor complexes small subunit family.</text>
</comment>
<gene>
    <name type="primary">Ap3s1</name>
</gene>
<organism>
    <name type="scientific">Mus musculus</name>
    <name type="common">Mouse</name>
    <dbReference type="NCBI Taxonomy" id="10090"/>
    <lineage>
        <taxon>Eukaryota</taxon>
        <taxon>Metazoa</taxon>
        <taxon>Chordata</taxon>
        <taxon>Craniata</taxon>
        <taxon>Vertebrata</taxon>
        <taxon>Euteleostomi</taxon>
        <taxon>Mammalia</taxon>
        <taxon>Eutheria</taxon>
        <taxon>Euarchontoglires</taxon>
        <taxon>Glires</taxon>
        <taxon>Rodentia</taxon>
        <taxon>Myomorpha</taxon>
        <taxon>Muroidea</taxon>
        <taxon>Muridae</taxon>
        <taxon>Murinae</taxon>
        <taxon>Mus</taxon>
        <taxon>Mus</taxon>
    </lineage>
</organism>
<accession>Q9DCR2</accession>
<accession>O88670</accession>
<dbReference type="EMBL" id="AF084575">
    <property type="protein sequence ID" value="AAC72819.1"/>
    <property type="molecule type" value="mRNA"/>
</dbReference>
<dbReference type="EMBL" id="AK002565">
    <property type="protein sequence ID" value="BAB22191.1"/>
    <property type="molecule type" value="mRNA"/>
</dbReference>
<dbReference type="EMBL" id="BC012656">
    <property type="protein sequence ID" value="AAH12656.1"/>
    <property type="molecule type" value="mRNA"/>
</dbReference>
<dbReference type="CCDS" id="CCDS29236.1"/>
<dbReference type="RefSeq" id="NP_033811.1">
    <property type="nucleotide sequence ID" value="NM_009681.5"/>
</dbReference>
<dbReference type="SMR" id="Q9DCR2"/>
<dbReference type="BioGRID" id="198135">
    <property type="interactions" value="21"/>
</dbReference>
<dbReference type="ComplexPortal" id="CPX-5145">
    <property type="entry name" value="Ubiquitous AP-3 Adaptor complex, sigma3a variant"/>
</dbReference>
<dbReference type="ComplexPortal" id="CPX-5147">
    <property type="entry name" value="Neuronal AP-3 Adaptor complex, sigma3a variant"/>
</dbReference>
<dbReference type="FunCoup" id="Q9DCR2">
    <property type="interactions" value="3133"/>
</dbReference>
<dbReference type="IntAct" id="Q9DCR2">
    <property type="interactions" value="5"/>
</dbReference>
<dbReference type="MINT" id="Q9DCR2"/>
<dbReference type="STRING" id="10090.ENSMUSP00000025357"/>
<dbReference type="iPTMnet" id="Q9DCR2"/>
<dbReference type="PhosphoSitePlus" id="Q9DCR2"/>
<dbReference type="jPOST" id="Q9DCR2"/>
<dbReference type="PaxDb" id="10090-ENSMUSP00000025357"/>
<dbReference type="ProteomicsDB" id="296359"/>
<dbReference type="Pumba" id="Q9DCR2"/>
<dbReference type="Antibodypedia" id="25448">
    <property type="antibodies" value="129 antibodies from 22 providers"/>
</dbReference>
<dbReference type="DNASU" id="11777"/>
<dbReference type="Ensembl" id="ENSMUST00000025357.9">
    <property type="protein sequence ID" value="ENSMUSP00000025357.8"/>
    <property type="gene ID" value="ENSMUSG00000024480.10"/>
</dbReference>
<dbReference type="GeneID" id="11777"/>
<dbReference type="KEGG" id="mmu:11777"/>
<dbReference type="UCSC" id="uc008evv.2">
    <property type="organism name" value="mouse"/>
</dbReference>
<dbReference type="AGR" id="MGI:1337062"/>
<dbReference type="CTD" id="1176"/>
<dbReference type="MGI" id="MGI:1337062">
    <property type="gene designation" value="Ap3s1"/>
</dbReference>
<dbReference type="VEuPathDB" id="HostDB:ENSMUSG00000024480"/>
<dbReference type="eggNOG" id="KOG0936">
    <property type="taxonomic scope" value="Eukaryota"/>
</dbReference>
<dbReference type="GeneTree" id="ENSGT00970000193421"/>
<dbReference type="HOGENOM" id="CLU_061221_2_2_1"/>
<dbReference type="InParanoid" id="Q9DCR2"/>
<dbReference type="OMA" id="DLIFNWQ"/>
<dbReference type="OrthoDB" id="10261046at2759"/>
<dbReference type="PhylomeDB" id="Q9DCR2"/>
<dbReference type="TreeFam" id="TF300189"/>
<dbReference type="Reactome" id="R-MMU-432722">
    <property type="pathway name" value="Golgi Associated Vesicle Biogenesis"/>
</dbReference>
<dbReference type="BioGRID-ORCS" id="11777">
    <property type="hits" value="5 hits in 80 CRISPR screens"/>
</dbReference>
<dbReference type="CD-CODE" id="CE726F99">
    <property type="entry name" value="Postsynaptic density"/>
</dbReference>
<dbReference type="ChiTaRS" id="Ap3s1">
    <property type="organism name" value="mouse"/>
</dbReference>
<dbReference type="PRO" id="PR:Q9DCR2"/>
<dbReference type="Proteomes" id="UP000000589">
    <property type="component" value="Chromosome 18"/>
</dbReference>
<dbReference type="RNAct" id="Q9DCR2">
    <property type="molecule type" value="protein"/>
</dbReference>
<dbReference type="Bgee" id="ENSMUSG00000024480">
    <property type="expression patterns" value="Expressed in ganglionic eminence and 70 other cell types or tissues"/>
</dbReference>
<dbReference type="ExpressionAtlas" id="Q9DCR2">
    <property type="expression patterns" value="baseline and differential"/>
</dbReference>
<dbReference type="GO" id="GO:0030123">
    <property type="term" value="C:AP-3 adaptor complex"/>
    <property type="evidence" value="ECO:0000303"/>
    <property type="project" value="ComplexPortal"/>
</dbReference>
<dbReference type="GO" id="GO:1904115">
    <property type="term" value="C:axon cytoplasm"/>
    <property type="evidence" value="ECO:0007669"/>
    <property type="project" value="GOC"/>
</dbReference>
<dbReference type="GO" id="GO:0030659">
    <property type="term" value="C:cytoplasmic vesicle membrane"/>
    <property type="evidence" value="ECO:0007669"/>
    <property type="project" value="UniProtKB-SubCell"/>
</dbReference>
<dbReference type="GO" id="GO:0005769">
    <property type="term" value="C:early endosome"/>
    <property type="evidence" value="ECO:0000303"/>
    <property type="project" value="ComplexPortal"/>
</dbReference>
<dbReference type="GO" id="GO:0016020">
    <property type="term" value="C:membrane"/>
    <property type="evidence" value="ECO:0000315"/>
    <property type="project" value="CACAO"/>
</dbReference>
<dbReference type="GO" id="GO:0098793">
    <property type="term" value="C:presynapse"/>
    <property type="evidence" value="ECO:0007669"/>
    <property type="project" value="GOC"/>
</dbReference>
<dbReference type="GO" id="GO:0005802">
    <property type="term" value="C:trans-Golgi network"/>
    <property type="evidence" value="ECO:0000304"/>
    <property type="project" value="MGI"/>
</dbReference>
<dbReference type="GO" id="GO:0008089">
    <property type="term" value="P:anterograde axonal transport"/>
    <property type="evidence" value="ECO:0000315"/>
    <property type="project" value="UniProtKB"/>
</dbReference>
<dbReference type="GO" id="GO:0048490">
    <property type="term" value="P:anterograde synaptic vesicle transport"/>
    <property type="evidence" value="ECO:0000315"/>
    <property type="project" value="UniProtKB"/>
</dbReference>
<dbReference type="GO" id="GO:0035654">
    <property type="term" value="P:clathrin-coated vesicle cargo loading, AP-3-mediated"/>
    <property type="evidence" value="ECO:0000303"/>
    <property type="project" value="ComplexPortal"/>
</dbReference>
<dbReference type="GO" id="GO:0006896">
    <property type="term" value="P:Golgi to vacuole transport"/>
    <property type="evidence" value="ECO:0007669"/>
    <property type="project" value="InterPro"/>
</dbReference>
<dbReference type="GO" id="GO:0006886">
    <property type="term" value="P:intracellular protein transport"/>
    <property type="evidence" value="ECO:0000304"/>
    <property type="project" value="MGI"/>
</dbReference>
<dbReference type="GO" id="GO:0046907">
    <property type="term" value="P:intracellular transport"/>
    <property type="evidence" value="ECO:0000303"/>
    <property type="project" value="ComplexPortal"/>
</dbReference>
<dbReference type="GO" id="GO:1903232">
    <property type="term" value="P:melanosome assembly"/>
    <property type="evidence" value="ECO:0000303"/>
    <property type="project" value="ComplexPortal"/>
</dbReference>
<dbReference type="GO" id="GO:0060155">
    <property type="term" value="P:platelet dense granule organization"/>
    <property type="evidence" value="ECO:0000303"/>
    <property type="project" value="ComplexPortal"/>
</dbReference>
<dbReference type="GO" id="GO:0016183">
    <property type="term" value="P:synaptic vesicle coating"/>
    <property type="evidence" value="ECO:0000303"/>
    <property type="project" value="ComplexPortal"/>
</dbReference>
<dbReference type="GO" id="GO:0036465">
    <property type="term" value="P:synaptic vesicle recycling"/>
    <property type="evidence" value="ECO:0000303"/>
    <property type="project" value="ComplexPortal"/>
</dbReference>
<dbReference type="GO" id="GO:0016192">
    <property type="term" value="P:vesicle-mediated transport"/>
    <property type="evidence" value="ECO:0000304"/>
    <property type="project" value="MGI"/>
</dbReference>
<dbReference type="CDD" id="cd14834">
    <property type="entry name" value="AP3_sigma"/>
    <property type="match status" value="1"/>
</dbReference>
<dbReference type="FunFam" id="3.30.450.60:FF:000001">
    <property type="entry name" value="AP complex subunit sigma"/>
    <property type="match status" value="1"/>
</dbReference>
<dbReference type="Gene3D" id="3.30.450.60">
    <property type="match status" value="1"/>
</dbReference>
<dbReference type="InterPro" id="IPR016635">
    <property type="entry name" value="AP_complex_ssu"/>
</dbReference>
<dbReference type="InterPro" id="IPR022775">
    <property type="entry name" value="AP_mu_sigma_su"/>
</dbReference>
<dbReference type="InterPro" id="IPR027155">
    <property type="entry name" value="APS3"/>
</dbReference>
<dbReference type="InterPro" id="IPR000804">
    <property type="entry name" value="Clathrin_sm-chain_CS"/>
</dbReference>
<dbReference type="InterPro" id="IPR011012">
    <property type="entry name" value="Longin-like_dom_sf"/>
</dbReference>
<dbReference type="PANTHER" id="PTHR11753">
    <property type="entry name" value="ADAPTOR COMPLEXES SMALL SUBUNIT FAMILY"/>
    <property type="match status" value="1"/>
</dbReference>
<dbReference type="Pfam" id="PF01217">
    <property type="entry name" value="Clat_adaptor_s"/>
    <property type="match status" value="1"/>
</dbReference>
<dbReference type="SUPFAM" id="SSF64356">
    <property type="entry name" value="SNARE-like"/>
    <property type="match status" value="1"/>
</dbReference>
<dbReference type="PROSITE" id="PS00989">
    <property type="entry name" value="CLAT_ADAPTOR_S"/>
    <property type="match status" value="1"/>
</dbReference>
<evidence type="ECO:0000250" key="1"/>
<evidence type="ECO:0000250" key="2">
    <source>
        <dbReference type="UniProtKB" id="Q92572"/>
    </source>
</evidence>
<evidence type="ECO:0000269" key="3">
    <source>
    </source>
</evidence>
<evidence type="ECO:0000269" key="4">
    <source>
    </source>
</evidence>
<evidence type="ECO:0000305" key="5"/>
<feature type="chain" id="PRO_0000193816" description="AP-3 complex subunit sigma-1">
    <location>
        <begin position="1"/>
        <end position="193"/>
    </location>
</feature>
<feature type="modified residue" description="Phosphoserine" evidence="2">
    <location>
        <position position="191"/>
    </location>
</feature>
<feature type="sequence conflict" description="In Ref. 2; BAB22191." evidence="5" ref="2">
    <original>Q</original>
    <variation>P</variation>
    <location>
        <position position="30"/>
    </location>
</feature>